<proteinExistence type="inferred from homology"/>
<keyword id="KW-0066">ATP synthesis</keyword>
<keyword id="KW-0997">Cell inner membrane</keyword>
<keyword id="KW-1003">Cell membrane</keyword>
<keyword id="KW-0138">CF(0)</keyword>
<keyword id="KW-0375">Hydrogen ion transport</keyword>
<keyword id="KW-0406">Ion transport</keyword>
<keyword id="KW-0472">Membrane</keyword>
<keyword id="KW-0812">Transmembrane</keyword>
<keyword id="KW-1133">Transmembrane helix</keyword>
<keyword id="KW-0813">Transport</keyword>
<dbReference type="EMBL" id="CP000733">
    <property type="protein sequence ID" value="ABS77704.1"/>
    <property type="molecule type" value="Genomic_DNA"/>
</dbReference>
<dbReference type="RefSeq" id="WP_011996449.1">
    <property type="nucleotide sequence ID" value="NC_009727.1"/>
</dbReference>
<dbReference type="SMR" id="A9KBG3"/>
<dbReference type="KEGG" id="cbd:CBUD_0182"/>
<dbReference type="HOGENOM" id="CLU_041018_1_0_6"/>
<dbReference type="Proteomes" id="UP000008555">
    <property type="component" value="Chromosome"/>
</dbReference>
<dbReference type="GO" id="GO:0005886">
    <property type="term" value="C:plasma membrane"/>
    <property type="evidence" value="ECO:0007669"/>
    <property type="project" value="UniProtKB-SubCell"/>
</dbReference>
<dbReference type="GO" id="GO:0045259">
    <property type="term" value="C:proton-transporting ATP synthase complex"/>
    <property type="evidence" value="ECO:0007669"/>
    <property type="project" value="UniProtKB-KW"/>
</dbReference>
<dbReference type="GO" id="GO:0046933">
    <property type="term" value="F:proton-transporting ATP synthase activity, rotational mechanism"/>
    <property type="evidence" value="ECO:0007669"/>
    <property type="project" value="UniProtKB-UniRule"/>
</dbReference>
<dbReference type="GO" id="GO:0042777">
    <property type="term" value="P:proton motive force-driven plasma membrane ATP synthesis"/>
    <property type="evidence" value="ECO:0007669"/>
    <property type="project" value="TreeGrafter"/>
</dbReference>
<dbReference type="CDD" id="cd00310">
    <property type="entry name" value="ATP-synt_Fo_a_6"/>
    <property type="match status" value="1"/>
</dbReference>
<dbReference type="FunFam" id="1.20.120.220:FF:000002">
    <property type="entry name" value="ATP synthase subunit a"/>
    <property type="match status" value="1"/>
</dbReference>
<dbReference type="Gene3D" id="1.20.120.220">
    <property type="entry name" value="ATP synthase, F0 complex, subunit A"/>
    <property type="match status" value="1"/>
</dbReference>
<dbReference type="HAMAP" id="MF_01393">
    <property type="entry name" value="ATP_synth_a_bact"/>
    <property type="match status" value="1"/>
</dbReference>
<dbReference type="InterPro" id="IPR045082">
    <property type="entry name" value="ATP_syn_F0_a_bact/chloroplast"/>
</dbReference>
<dbReference type="InterPro" id="IPR000568">
    <property type="entry name" value="ATP_synth_F0_asu"/>
</dbReference>
<dbReference type="InterPro" id="IPR023011">
    <property type="entry name" value="ATP_synth_F0_asu_AS"/>
</dbReference>
<dbReference type="InterPro" id="IPR035908">
    <property type="entry name" value="F0_ATP_A_sf"/>
</dbReference>
<dbReference type="NCBIfam" id="TIGR01131">
    <property type="entry name" value="ATP_synt_6_or_A"/>
    <property type="match status" value="1"/>
</dbReference>
<dbReference type="NCBIfam" id="NF004477">
    <property type="entry name" value="PRK05815.1-1"/>
    <property type="match status" value="1"/>
</dbReference>
<dbReference type="PANTHER" id="PTHR42823">
    <property type="entry name" value="ATP SYNTHASE SUBUNIT A, CHLOROPLASTIC"/>
    <property type="match status" value="1"/>
</dbReference>
<dbReference type="PANTHER" id="PTHR42823:SF3">
    <property type="entry name" value="ATP SYNTHASE SUBUNIT A, CHLOROPLASTIC"/>
    <property type="match status" value="1"/>
</dbReference>
<dbReference type="Pfam" id="PF00119">
    <property type="entry name" value="ATP-synt_A"/>
    <property type="match status" value="1"/>
</dbReference>
<dbReference type="PRINTS" id="PR00123">
    <property type="entry name" value="ATPASEA"/>
</dbReference>
<dbReference type="SUPFAM" id="SSF81336">
    <property type="entry name" value="F1F0 ATP synthase subunit A"/>
    <property type="match status" value="1"/>
</dbReference>
<dbReference type="PROSITE" id="PS00449">
    <property type="entry name" value="ATPASE_A"/>
    <property type="match status" value="1"/>
</dbReference>
<reference key="1">
    <citation type="journal article" date="2009" name="Infect. Immun.">
        <title>Comparative genomics reveal extensive transposon-mediated genomic plasticity and diversity among potential effector proteins within the genus Coxiella.</title>
        <authorList>
            <person name="Beare P.A."/>
            <person name="Unsworth N."/>
            <person name="Andoh M."/>
            <person name="Voth D.E."/>
            <person name="Omsland A."/>
            <person name="Gilk S.D."/>
            <person name="Williams K.P."/>
            <person name="Sobral B.W."/>
            <person name="Kupko J.J. III"/>
            <person name="Porcella S.F."/>
            <person name="Samuel J.E."/>
            <person name="Heinzen R.A."/>
        </authorList>
    </citation>
    <scope>NUCLEOTIDE SEQUENCE [LARGE SCALE GENOMIC DNA]</scope>
    <source>
        <strain>Dugway 5J108-111</strain>
    </source>
</reference>
<sequence length="264" mass="29838">MYAQPKLTSAEYVQHHMSHWKLNLHNFTFTDGGFWTLNLDTLIISVVLGALFILIFYIVARRATASVPGKWQNAIEMAVEAADGTVKDSFHGDRSLVAPLALTIFIWVFLMNFMDLVPVDLIPRLFQMGGVEHFKAVPTADPTLTFAMSITVFVLVIFYNFKMKGAIGLGKEVLSRPFGWYLMPINVIFRLIDEGVKPISLALRLFGNLFAGELIFILIALLPWWSQFTLGMVWTLFHLLVITVQAFIFMMLTVVYISLAAESH</sequence>
<accession>A9KBG3</accession>
<gene>
    <name evidence="1" type="primary">atpB</name>
    <name type="ordered locus">CBUD_0182</name>
</gene>
<name>ATP6_COXBN</name>
<evidence type="ECO:0000255" key="1">
    <source>
        <dbReference type="HAMAP-Rule" id="MF_01393"/>
    </source>
</evidence>
<comment type="function">
    <text evidence="1">Key component of the proton channel; it plays a direct role in the translocation of protons across the membrane.</text>
</comment>
<comment type="subunit">
    <text evidence="1">F-type ATPases have 2 components, CF(1) - the catalytic core - and CF(0) - the membrane proton channel. CF(1) has five subunits: alpha(3), beta(3), gamma(1), delta(1), epsilon(1). CF(0) has three main subunits: a(1), b(2) and c(9-12). The alpha and beta chains form an alternating ring which encloses part of the gamma chain. CF(1) is attached to CF(0) by a central stalk formed by the gamma and epsilon chains, while a peripheral stalk is formed by the delta and b chains.</text>
</comment>
<comment type="subcellular location">
    <subcellularLocation>
        <location evidence="1">Cell inner membrane</location>
        <topology evidence="1">Multi-pass membrane protein</topology>
    </subcellularLocation>
</comment>
<comment type="similarity">
    <text evidence="1">Belongs to the ATPase A chain family.</text>
</comment>
<feature type="chain" id="PRO_0000362278" description="ATP synthase subunit a">
    <location>
        <begin position="1"/>
        <end position="264"/>
    </location>
</feature>
<feature type="transmembrane region" description="Helical" evidence="1">
    <location>
        <begin position="39"/>
        <end position="59"/>
    </location>
</feature>
<feature type="transmembrane region" description="Helical" evidence="1">
    <location>
        <begin position="97"/>
        <end position="117"/>
    </location>
</feature>
<feature type="transmembrane region" description="Helical" evidence="1">
    <location>
        <begin position="139"/>
        <end position="159"/>
    </location>
</feature>
<feature type="transmembrane region" description="Helical" evidence="1">
    <location>
        <begin position="205"/>
        <end position="225"/>
    </location>
</feature>
<feature type="transmembrane region" description="Helical" evidence="1">
    <location>
        <begin position="239"/>
        <end position="259"/>
    </location>
</feature>
<organism>
    <name type="scientific">Coxiella burnetii (strain Dugway 5J108-111)</name>
    <dbReference type="NCBI Taxonomy" id="434922"/>
    <lineage>
        <taxon>Bacteria</taxon>
        <taxon>Pseudomonadati</taxon>
        <taxon>Pseudomonadota</taxon>
        <taxon>Gammaproteobacteria</taxon>
        <taxon>Legionellales</taxon>
        <taxon>Coxiellaceae</taxon>
        <taxon>Coxiella</taxon>
    </lineage>
</organism>
<protein>
    <recommendedName>
        <fullName evidence="1">ATP synthase subunit a</fullName>
    </recommendedName>
    <alternativeName>
        <fullName evidence="1">ATP synthase F0 sector subunit a</fullName>
    </alternativeName>
    <alternativeName>
        <fullName evidence="1">F-ATPase subunit 6</fullName>
    </alternativeName>
</protein>